<name>SUCC_MYCBT</name>
<accession>C1ALT7</accession>
<dbReference type="EC" id="6.2.1.5" evidence="1"/>
<dbReference type="EMBL" id="AP010918">
    <property type="protein sequence ID" value="BAH25266.1"/>
    <property type="molecule type" value="Genomic_DNA"/>
</dbReference>
<dbReference type="RefSeq" id="WP_003404866.1">
    <property type="nucleotide sequence ID" value="NZ_CP014566.1"/>
</dbReference>
<dbReference type="SMR" id="C1ALT7"/>
<dbReference type="KEGG" id="mbt:JTY_0975"/>
<dbReference type="HOGENOM" id="CLU_037430_4_0_11"/>
<dbReference type="UniPathway" id="UPA00223">
    <property type="reaction ID" value="UER00999"/>
</dbReference>
<dbReference type="GO" id="GO:0005829">
    <property type="term" value="C:cytosol"/>
    <property type="evidence" value="ECO:0007669"/>
    <property type="project" value="TreeGrafter"/>
</dbReference>
<dbReference type="GO" id="GO:0042709">
    <property type="term" value="C:succinate-CoA ligase complex"/>
    <property type="evidence" value="ECO:0007669"/>
    <property type="project" value="TreeGrafter"/>
</dbReference>
<dbReference type="GO" id="GO:0005524">
    <property type="term" value="F:ATP binding"/>
    <property type="evidence" value="ECO:0007669"/>
    <property type="project" value="UniProtKB-UniRule"/>
</dbReference>
<dbReference type="GO" id="GO:0000287">
    <property type="term" value="F:magnesium ion binding"/>
    <property type="evidence" value="ECO:0007669"/>
    <property type="project" value="UniProtKB-UniRule"/>
</dbReference>
<dbReference type="GO" id="GO:0004775">
    <property type="term" value="F:succinate-CoA ligase (ADP-forming) activity"/>
    <property type="evidence" value="ECO:0007669"/>
    <property type="project" value="UniProtKB-UniRule"/>
</dbReference>
<dbReference type="GO" id="GO:0004776">
    <property type="term" value="F:succinate-CoA ligase (GDP-forming) activity"/>
    <property type="evidence" value="ECO:0007669"/>
    <property type="project" value="RHEA"/>
</dbReference>
<dbReference type="GO" id="GO:0006104">
    <property type="term" value="P:succinyl-CoA metabolic process"/>
    <property type="evidence" value="ECO:0007669"/>
    <property type="project" value="TreeGrafter"/>
</dbReference>
<dbReference type="GO" id="GO:0006099">
    <property type="term" value="P:tricarboxylic acid cycle"/>
    <property type="evidence" value="ECO:0007669"/>
    <property type="project" value="UniProtKB-UniRule"/>
</dbReference>
<dbReference type="FunFam" id="3.30.1490.20:FF:000014">
    <property type="entry name" value="Succinate--CoA ligase [ADP-forming] subunit beta"/>
    <property type="match status" value="1"/>
</dbReference>
<dbReference type="FunFam" id="3.30.470.20:FF:000002">
    <property type="entry name" value="Succinate--CoA ligase [ADP-forming] subunit beta"/>
    <property type="match status" value="1"/>
</dbReference>
<dbReference type="FunFam" id="3.40.50.261:FF:000007">
    <property type="entry name" value="Succinate--CoA ligase [ADP-forming] subunit beta"/>
    <property type="match status" value="1"/>
</dbReference>
<dbReference type="Gene3D" id="3.30.1490.20">
    <property type="entry name" value="ATP-grasp fold, A domain"/>
    <property type="match status" value="1"/>
</dbReference>
<dbReference type="Gene3D" id="3.30.470.20">
    <property type="entry name" value="ATP-grasp fold, B domain"/>
    <property type="match status" value="1"/>
</dbReference>
<dbReference type="Gene3D" id="3.40.50.261">
    <property type="entry name" value="Succinyl-CoA synthetase domains"/>
    <property type="match status" value="1"/>
</dbReference>
<dbReference type="HAMAP" id="MF_00558">
    <property type="entry name" value="Succ_CoA_beta"/>
    <property type="match status" value="1"/>
</dbReference>
<dbReference type="InterPro" id="IPR011761">
    <property type="entry name" value="ATP-grasp"/>
</dbReference>
<dbReference type="InterPro" id="IPR013650">
    <property type="entry name" value="ATP-grasp_succ-CoA_synth-type"/>
</dbReference>
<dbReference type="InterPro" id="IPR013815">
    <property type="entry name" value="ATP_grasp_subdomain_1"/>
</dbReference>
<dbReference type="InterPro" id="IPR017866">
    <property type="entry name" value="Succ-CoA_synthase_bsu_CS"/>
</dbReference>
<dbReference type="InterPro" id="IPR005811">
    <property type="entry name" value="SUCC_ACL_C"/>
</dbReference>
<dbReference type="InterPro" id="IPR005809">
    <property type="entry name" value="Succ_CoA_ligase-like_bsu"/>
</dbReference>
<dbReference type="InterPro" id="IPR016102">
    <property type="entry name" value="Succinyl-CoA_synth-like"/>
</dbReference>
<dbReference type="NCBIfam" id="NF001913">
    <property type="entry name" value="PRK00696.1"/>
    <property type="match status" value="1"/>
</dbReference>
<dbReference type="NCBIfam" id="TIGR01016">
    <property type="entry name" value="sucCoAbeta"/>
    <property type="match status" value="1"/>
</dbReference>
<dbReference type="PANTHER" id="PTHR11815:SF10">
    <property type="entry name" value="SUCCINATE--COA LIGASE [GDP-FORMING] SUBUNIT BETA, MITOCHONDRIAL"/>
    <property type="match status" value="1"/>
</dbReference>
<dbReference type="PANTHER" id="PTHR11815">
    <property type="entry name" value="SUCCINYL-COA SYNTHETASE BETA CHAIN"/>
    <property type="match status" value="1"/>
</dbReference>
<dbReference type="Pfam" id="PF08442">
    <property type="entry name" value="ATP-grasp_2"/>
    <property type="match status" value="1"/>
</dbReference>
<dbReference type="Pfam" id="PF00549">
    <property type="entry name" value="Ligase_CoA"/>
    <property type="match status" value="1"/>
</dbReference>
<dbReference type="PIRSF" id="PIRSF001554">
    <property type="entry name" value="SucCS_beta"/>
    <property type="match status" value="1"/>
</dbReference>
<dbReference type="SUPFAM" id="SSF56059">
    <property type="entry name" value="Glutathione synthetase ATP-binding domain-like"/>
    <property type="match status" value="1"/>
</dbReference>
<dbReference type="SUPFAM" id="SSF52210">
    <property type="entry name" value="Succinyl-CoA synthetase domains"/>
    <property type="match status" value="1"/>
</dbReference>
<dbReference type="PROSITE" id="PS50975">
    <property type="entry name" value="ATP_GRASP"/>
    <property type="match status" value="1"/>
</dbReference>
<dbReference type="PROSITE" id="PS01217">
    <property type="entry name" value="SUCCINYL_COA_LIG_3"/>
    <property type="match status" value="1"/>
</dbReference>
<proteinExistence type="inferred from homology"/>
<evidence type="ECO:0000255" key="1">
    <source>
        <dbReference type="HAMAP-Rule" id="MF_00558"/>
    </source>
</evidence>
<reference key="1">
    <citation type="journal article" date="2009" name="Vaccine">
        <title>Whole genome sequence analysis of Mycobacterium bovis bacillus Calmette-Guerin (BCG) Tokyo 172: a comparative study of BCG vaccine substrains.</title>
        <authorList>
            <person name="Seki M."/>
            <person name="Honda I."/>
            <person name="Fujita I."/>
            <person name="Yano I."/>
            <person name="Yamamoto S."/>
            <person name="Koyama A."/>
        </authorList>
    </citation>
    <scope>NUCLEOTIDE SEQUENCE [LARGE SCALE GENOMIC DNA]</scope>
    <source>
        <strain>BCG / Tokyo 172 / ATCC 35737 / TMC 1019</strain>
    </source>
</reference>
<feature type="chain" id="PRO_1000197708" description="Succinate--CoA ligase [ADP-forming] subunit beta">
    <location>
        <begin position="1"/>
        <end position="387"/>
    </location>
</feature>
<feature type="domain" description="ATP-grasp" evidence="1">
    <location>
        <begin position="9"/>
        <end position="236"/>
    </location>
</feature>
<feature type="binding site" evidence="1">
    <location>
        <position position="45"/>
    </location>
    <ligand>
        <name>ATP</name>
        <dbReference type="ChEBI" id="CHEBI:30616"/>
    </ligand>
</feature>
<feature type="binding site" evidence="1">
    <location>
        <begin position="52"/>
        <end position="54"/>
    </location>
    <ligand>
        <name>ATP</name>
        <dbReference type="ChEBI" id="CHEBI:30616"/>
    </ligand>
</feature>
<feature type="binding site" evidence="1">
    <location>
        <position position="94"/>
    </location>
    <ligand>
        <name>ATP</name>
        <dbReference type="ChEBI" id="CHEBI:30616"/>
    </ligand>
</feature>
<feature type="binding site" evidence="1">
    <location>
        <position position="99"/>
    </location>
    <ligand>
        <name>ATP</name>
        <dbReference type="ChEBI" id="CHEBI:30616"/>
    </ligand>
</feature>
<feature type="binding site" evidence="1">
    <location>
        <position position="191"/>
    </location>
    <ligand>
        <name>Mg(2+)</name>
        <dbReference type="ChEBI" id="CHEBI:18420"/>
    </ligand>
</feature>
<feature type="binding site" evidence="1">
    <location>
        <position position="205"/>
    </location>
    <ligand>
        <name>Mg(2+)</name>
        <dbReference type="ChEBI" id="CHEBI:18420"/>
    </ligand>
</feature>
<feature type="binding site" evidence="1">
    <location>
        <position position="256"/>
    </location>
    <ligand>
        <name>substrate</name>
        <note>ligand shared with subunit alpha</note>
    </ligand>
</feature>
<feature type="binding site" evidence="1">
    <location>
        <begin position="318"/>
        <end position="320"/>
    </location>
    <ligand>
        <name>substrate</name>
        <note>ligand shared with subunit alpha</note>
    </ligand>
</feature>
<comment type="function">
    <text evidence="1">Succinyl-CoA synthetase functions in the citric acid cycle (TCA), coupling the hydrolysis of succinyl-CoA to the synthesis of either ATP or GTP and thus represents the only step of substrate-level phosphorylation in the TCA. The beta subunit provides nucleotide specificity of the enzyme and binds the substrate succinate, while the binding sites for coenzyme A and phosphate are found in the alpha subunit.</text>
</comment>
<comment type="catalytic activity">
    <reaction evidence="1">
        <text>succinate + ATP + CoA = succinyl-CoA + ADP + phosphate</text>
        <dbReference type="Rhea" id="RHEA:17661"/>
        <dbReference type="ChEBI" id="CHEBI:30031"/>
        <dbReference type="ChEBI" id="CHEBI:30616"/>
        <dbReference type="ChEBI" id="CHEBI:43474"/>
        <dbReference type="ChEBI" id="CHEBI:57287"/>
        <dbReference type="ChEBI" id="CHEBI:57292"/>
        <dbReference type="ChEBI" id="CHEBI:456216"/>
        <dbReference type="EC" id="6.2.1.5"/>
    </reaction>
    <physiologicalReaction direction="right-to-left" evidence="1">
        <dbReference type="Rhea" id="RHEA:17663"/>
    </physiologicalReaction>
</comment>
<comment type="catalytic activity">
    <reaction evidence="1">
        <text>GTP + succinate + CoA = succinyl-CoA + GDP + phosphate</text>
        <dbReference type="Rhea" id="RHEA:22120"/>
        <dbReference type="ChEBI" id="CHEBI:30031"/>
        <dbReference type="ChEBI" id="CHEBI:37565"/>
        <dbReference type="ChEBI" id="CHEBI:43474"/>
        <dbReference type="ChEBI" id="CHEBI:57287"/>
        <dbReference type="ChEBI" id="CHEBI:57292"/>
        <dbReference type="ChEBI" id="CHEBI:58189"/>
    </reaction>
    <physiologicalReaction direction="right-to-left" evidence="1">
        <dbReference type="Rhea" id="RHEA:22122"/>
    </physiologicalReaction>
</comment>
<comment type="cofactor">
    <cofactor evidence="1">
        <name>Mg(2+)</name>
        <dbReference type="ChEBI" id="CHEBI:18420"/>
    </cofactor>
    <text evidence="1">Binds 1 Mg(2+) ion per subunit.</text>
</comment>
<comment type="pathway">
    <text evidence="1">Carbohydrate metabolism; tricarboxylic acid cycle; succinate from succinyl-CoA (ligase route): step 1/1.</text>
</comment>
<comment type="subunit">
    <text evidence="1">Heterotetramer of two alpha and two beta subunits.</text>
</comment>
<comment type="similarity">
    <text evidence="1">Belongs to the succinate/malate CoA ligase beta subunit family.</text>
</comment>
<organism>
    <name type="scientific">Mycobacterium bovis (strain BCG / Tokyo 172 / ATCC 35737 / TMC 1019)</name>
    <dbReference type="NCBI Taxonomy" id="561275"/>
    <lineage>
        <taxon>Bacteria</taxon>
        <taxon>Bacillati</taxon>
        <taxon>Actinomycetota</taxon>
        <taxon>Actinomycetes</taxon>
        <taxon>Mycobacteriales</taxon>
        <taxon>Mycobacteriaceae</taxon>
        <taxon>Mycobacterium</taxon>
        <taxon>Mycobacterium tuberculosis complex</taxon>
    </lineage>
</organism>
<gene>
    <name evidence="1" type="primary">sucC</name>
    <name type="ordered locus">JTY_0975</name>
</gene>
<keyword id="KW-0067">ATP-binding</keyword>
<keyword id="KW-0436">Ligase</keyword>
<keyword id="KW-0460">Magnesium</keyword>
<keyword id="KW-0479">Metal-binding</keyword>
<keyword id="KW-0547">Nucleotide-binding</keyword>
<keyword id="KW-0816">Tricarboxylic acid cycle</keyword>
<sequence length="387" mass="40898">MDLFEYQAKELFAKHNVPSTPGRVTDTAEGAKAIATEIGRPVMVKAQVKIGGRGKAGGVKYAATPQDAYEHAKNILGLDIKGHIVKKLLVAEASDIAEEYYLSFLLDRANRTYLAMCSVEGGMEIEEVAATKPERLAKVPVNAVKGVDLDFARSIAEQGHLPAEVLDTAAVTIAKLWELFVAEDATLVEVNPLVRTPDHKILALDAKITLDGNADFRQPGHAEFEDRAATDPLELKAKEHDLNYVKLDGQVGIIGNGAGLAMSTLDVVAYAGEKHGGVKPANFLDIGGGASAEVMAAGLDVVLGDQQVKSVFVNVFGGITSCDAVATGIVKALGMLGDEANKPLVVRLDGNNVEEGRRILTEANHPLVTLVATMDEAADKAAELASA</sequence>
<protein>
    <recommendedName>
        <fullName evidence="1">Succinate--CoA ligase [ADP-forming] subunit beta</fullName>
        <ecNumber evidence="1">6.2.1.5</ecNumber>
    </recommendedName>
    <alternativeName>
        <fullName evidence="1">Succinyl-CoA synthetase subunit beta</fullName>
        <shortName evidence="1">SCS-beta</shortName>
    </alternativeName>
</protein>